<keyword id="KW-0687">Ribonucleoprotein</keyword>
<keyword id="KW-0689">Ribosomal protein</keyword>
<keyword id="KW-0694">RNA-binding</keyword>
<keyword id="KW-0699">rRNA-binding</keyword>
<organism>
    <name type="scientific">Vibrio cholerae serotype O1 (strain M66-2)</name>
    <dbReference type="NCBI Taxonomy" id="579112"/>
    <lineage>
        <taxon>Bacteria</taxon>
        <taxon>Pseudomonadati</taxon>
        <taxon>Pseudomonadota</taxon>
        <taxon>Gammaproteobacteria</taxon>
        <taxon>Vibrionales</taxon>
        <taxon>Vibrionaceae</taxon>
        <taxon>Vibrio</taxon>
    </lineage>
</organism>
<dbReference type="EMBL" id="CP001233">
    <property type="protein sequence ID" value="ACP06812.1"/>
    <property type="molecule type" value="Genomic_DNA"/>
</dbReference>
<dbReference type="RefSeq" id="WP_000422344.1">
    <property type="nucleotide sequence ID" value="NC_012578.1"/>
</dbReference>
<dbReference type="SMR" id="C3LRQ7"/>
<dbReference type="GeneID" id="94012753"/>
<dbReference type="KEGG" id="vcm:VCM66_2515"/>
<dbReference type="HOGENOM" id="CLU_041575_5_2_6"/>
<dbReference type="Proteomes" id="UP000001217">
    <property type="component" value="Chromosome I"/>
</dbReference>
<dbReference type="GO" id="GO:1990904">
    <property type="term" value="C:ribonucleoprotein complex"/>
    <property type="evidence" value="ECO:0007669"/>
    <property type="project" value="UniProtKB-KW"/>
</dbReference>
<dbReference type="GO" id="GO:0005840">
    <property type="term" value="C:ribosome"/>
    <property type="evidence" value="ECO:0007669"/>
    <property type="project" value="UniProtKB-KW"/>
</dbReference>
<dbReference type="GO" id="GO:0019843">
    <property type="term" value="F:rRNA binding"/>
    <property type="evidence" value="ECO:0007669"/>
    <property type="project" value="UniProtKB-UniRule"/>
</dbReference>
<dbReference type="GO" id="GO:0003735">
    <property type="term" value="F:structural constituent of ribosome"/>
    <property type="evidence" value="ECO:0007669"/>
    <property type="project" value="InterPro"/>
</dbReference>
<dbReference type="GO" id="GO:0006412">
    <property type="term" value="P:translation"/>
    <property type="evidence" value="ECO:0007669"/>
    <property type="project" value="UniProtKB-UniRule"/>
</dbReference>
<dbReference type="FunFam" id="3.40.1370.10:FF:000001">
    <property type="entry name" value="50S ribosomal protein L4"/>
    <property type="match status" value="1"/>
</dbReference>
<dbReference type="Gene3D" id="3.40.1370.10">
    <property type="match status" value="1"/>
</dbReference>
<dbReference type="HAMAP" id="MF_01328_B">
    <property type="entry name" value="Ribosomal_uL4_B"/>
    <property type="match status" value="1"/>
</dbReference>
<dbReference type="InterPro" id="IPR002136">
    <property type="entry name" value="Ribosomal_uL4"/>
</dbReference>
<dbReference type="InterPro" id="IPR013005">
    <property type="entry name" value="Ribosomal_uL4-like"/>
</dbReference>
<dbReference type="InterPro" id="IPR023574">
    <property type="entry name" value="Ribosomal_uL4_dom_sf"/>
</dbReference>
<dbReference type="NCBIfam" id="TIGR03953">
    <property type="entry name" value="rplD_bact"/>
    <property type="match status" value="1"/>
</dbReference>
<dbReference type="PANTHER" id="PTHR10746">
    <property type="entry name" value="50S RIBOSOMAL PROTEIN L4"/>
    <property type="match status" value="1"/>
</dbReference>
<dbReference type="PANTHER" id="PTHR10746:SF6">
    <property type="entry name" value="LARGE RIBOSOMAL SUBUNIT PROTEIN UL4M"/>
    <property type="match status" value="1"/>
</dbReference>
<dbReference type="Pfam" id="PF00573">
    <property type="entry name" value="Ribosomal_L4"/>
    <property type="match status" value="1"/>
</dbReference>
<dbReference type="SUPFAM" id="SSF52166">
    <property type="entry name" value="Ribosomal protein L4"/>
    <property type="match status" value="1"/>
</dbReference>
<reference key="1">
    <citation type="journal article" date="2008" name="PLoS ONE">
        <title>A recalibrated molecular clock and independent origins for the cholera pandemic clones.</title>
        <authorList>
            <person name="Feng L."/>
            <person name="Reeves P.R."/>
            <person name="Lan R."/>
            <person name="Ren Y."/>
            <person name="Gao C."/>
            <person name="Zhou Z."/>
            <person name="Ren Y."/>
            <person name="Cheng J."/>
            <person name="Wang W."/>
            <person name="Wang J."/>
            <person name="Qian W."/>
            <person name="Li D."/>
            <person name="Wang L."/>
        </authorList>
    </citation>
    <scope>NUCLEOTIDE SEQUENCE [LARGE SCALE GENOMIC DNA]</scope>
    <source>
        <strain>M66-2</strain>
    </source>
</reference>
<name>RL4_VIBCM</name>
<sequence>MELMVKGANALTVSETTFGREFNEALVHQVVVAYAAGARQGTRAQKTRSEVSGGGAKPWRQKGTGRARAGTIRSPIWRTGGVTFAAKPQDHSQKVNKKMYRGAMKSILSELVRQERLIVVENFSVEAPKTKALVAKLKELELNDVLIVTGEVDENLFLAARNLYKVDVRDVTGIDPVSLIAFDKVLMTAAAVKQVEEMLA</sequence>
<evidence type="ECO:0000255" key="1">
    <source>
        <dbReference type="HAMAP-Rule" id="MF_01328"/>
    </source>
</evidence>
<evidence type="ECO:0000256" key="2">
    <source>
        <dbReference type="SAM" id="MobiDB-lite"/>
    </source>
</evidence>
<evidence type="ECO:0000305" key="3"/>
<feature type="chain" id="PRO_1000166034" description="Large ribosomal subunit protein uL4">
    <location>
        <begin position="1"/>
        <end position="200"/>
    </location>
</feature>
<feature type="region of interest" description="Disordered" evidence="2">
    <location>
        <begin position="42"/>
        <end position="65"/>
    </location>
</feature>
<comment type="function">
    <text evidence="1">One of the primary rRNA binding proteins, this protein initially binds near the 5'-end of the 23S rRNA. It is important during the early stages of 50S assembly. It makes multiple contacts with different domains of the 23S rRNA in the assembled 50S subunit and ribosome.</text>
</comment>
<comment type="function">
    <text evidence="1">Forms part of the polypeptide exit tunnel.</text>
</comment>
<comment type="subunit">
    <text evidence="1">Part of the 50S ribosomal subunit.</text>
</comment>
<comment type="similarity">
    <text evidence="1">Belongs to the universal ribosomal protein uL4 family.</text>
</comment>
<accession>C3LRQ7</accession>
<gene>
    <name evidence="1" type="primary">rplD</name>
    <name type="ordered locus">VCM66_2515</name>
</gene>
<proteinExistence type="inferred from homology"/>
<protein>
    <recommendedName>
        <fullName evidence="1">Large ribosomal subunit protein uL4</fullName>
    </recommendedName>
    <alternativeName>
        <fullName evidence="3">50S ribosomal protein L4</fullName>
    </alternativeName>
</protein>